<sequence length="179" mass="20503">MARLKEIYWKEIAPKLKEELKLSNVMEVPRVTKITLNMGLGEAVGDKKVIEHAVADLEKITGQKVVVTYARKSIAGFKVREGWPIGVKVTLRRERMYEFLDRLLSISLPRVRDFRGLNAKSFDGRGNYSMGVKEQIIFPEIDYDKIDALRGLDITLTTTAKNDDEGRALLRAFKFPFRN</sequence>
<dbReference type="EMBL" id="AM181176">
    <property type="protein sequence ID" value="CAY52745.1"/>
    <property type="molecule type" value="Genomic_DNA"/>
</dbReference>
<dbReference type="RefSeq" id="WP_003176415.1">
    <property type="nucleotide sequence ID" value="NC_012660.1"/>
</dbReference>
<dbReference type="SMR" id="C3K2W4"/>
<dbReference type="STRING" id="294.SRM1_05167"/>
<dbReference type="GeneID" id="93502204"/>
<dbReference type="eggNOG" id="COG0094">
    <property type="taxonomic scope" value="Bacteria"/>
</dbReference>
<dbReference type="HOGENOM" id="CLU_061015_2_1_6"/>
<dbReference type="OrthoDB" id="9806626at2"/>
<dbReference type="GO" id="GO:1990904">
    <property type="term" value="C:ribonucleoprotein complex"/>
    <property type="evidence" value="ECO:0007669"/>
    <property type="project" value="UniProtKB-KW"/>
</dbReference>
<dbReference type="GO" id="GO:0005840">
    <property type="term" value="C:ribosome"/>
    <property type="evidence" value="ECO:0007669"/>
    <property type="project" value="UniProtKB-KW"/>
</dbReference>
<dbReference type="GO" id="GO:0019843">
    <property type="term" value="F:rRNA binding"/>
    <property type="evidence" value="ECO:0007669"/>
    <property type="project" value="UniProtKB-UniRule"/>
</dbReference>
<dbReference type="GO" id="GO:0003735">
    <property type="term" value="F:structural constituent of ribosome"/>
    <property type="evidence" value="ECO:0007669"/>
    <property type="project" value="InterPro"/>
</dbReference>
<dbReference type="GO" id="GO:0000049">
    <property type="term" value="F:tRNA binding"/>
    <property type="evidence" value="ECO:0007669"/>
    <property type="project" value="UniProtKB-UniRule"/>
</dbReference>
<dbReference type="GO" id="GO:0006412">
    <property type="term" value="P:translation"/>
    <property type="evidence" value="ECO:0007669"/>
    <property type="project" value="UniProtKB-UniRule"/>
</dbReference>
<dbReference type="FunFam" id="3.30.1440.10:FF:000001">
    <property type="entry name" value="50S ribosomal protein L5"/>
    <property type="match status" value="1"/>
</dbReference>
<dbReference type="Gene3D" id="3.30.1440.10">
    <property type="match status" value="1"/>
</dbReference>
<dbReference type="HAMAP" id="MF_01333_B">
    <property type="entry name" value="Ribosomal_uL5_B"/>
    <property type="match status" value="1"/>
</dbReference>
<dbReference type="InterPro" id="IPR002132">
    <property type="entry name" value="Ribosomal_uL5"/>
</dbReference>
<dbReference type="InterPro" id="IPR020930">
    <property type="entry name" value="Ribosomal_uL5_bac-type"/>
</dbReference>
<dbReference type="InterPro" id="IPR031309">
    <property type="entry name" value="Ribosomal_uL5_C"/>
</dbReference>
<dbReference type="InterPro" id="IPR020929">
    <property type="entry name" value="Ribosomal_uL5_CS"/>
</dbReference>
<dbReference type="InterPro" id="IPR022803">
    <property type="entry name" value="Ribosomal_uL5_dom_sf"/>
</dbReference>
<dbReference type="InterPro" id="IPR031310">
    <property type="entry name" value="Ribosomal_uL5_N"/>
</dbReference>
<dbReference type="NCBIfam" id="NF000585">
    <property type="entry name" value="PRK00010.1"/>
    <property type="match status" value="1"/>
</dbReference>
<dbReference type="PANTHER" id="PTHR11994">
    <property type="entry name" value="60S RIBOSOMAL PROTEIN L11-RELATED"/>
    <property type="match status" value="1"/>
</dbReference>
<dbReference type="Pfam" id="PF00281">
    <property type="entry name" value="Ribosomal_L5"/>
    <property type="match status" value="1"/>
</dbReference>
<dbReference type="Pfam" id="PF00673">
    <property type="entry name" value="Ribosomal_L5_C"/>
    <property type="match status" value="1"/>
</dbReference>
<dbReference type="PIRSF" id="PIRSF002161">
    <property type="entry name" value="Ribosomal_L5"/>
    <property type="match status" value="1"/>
</dbReference>
<dbReference type="SUPFAM" id="SSF55282">
    <property type="entry name" value="RL5-like"/>
    <property type="match status" value="1"/>
</dbReference>
<dbReference type="PROSITE" id="PS00358">
    <property type="entry name" value="RIBOSOMAL_L5"/>
    <property type="match status" value="1"/>
</dbReference>
<organism>
    <name type="scientific">Pseudomonas fluorescens (strain SBW25)</name>
    <dbReference type="NCBI Taxonomy" id="216595"/>
    <lineage>
        <taxon>Bacteria</taxon>
        <taxon>Pseudomonadati</taxon>
        <taxon>Pseudomonadota</taxon>
        <taxon>Gammaproteobacteria</taxon>
        <taxon>Pseudomonadales</taxon>
        <taxon>Pseudomonadaceae</taxon>
        <taxon>Pseudomonas</taxon>
    </lineage>
</organism>
<name>RL5_PSEFS</name>
<proteinExistence type="inferred from homology"/>
<gene>
    <name evidence="1" type="primary">rplE</name>
    <name type="ordered locus">PFLU_5515</name>
</gene>
<keyword id="KW-0687">Ribonucleoprotein</keyword>
<keyword id="KW-0689">Ribosomal protein</keyword>
<keyword id="KW-0694">RNA-binding</keyword>
<keyword id="KW-0699">rRNA-binding</keyword>
<keyword id="KW-0820">tRNA-binding</keyword>
<reference key="1">
    <citation type="journal article" date="2009" name="Genome Biol.">
        <title>Genomic and genetic analyses of diversity and plant interactions of Pseudomonas fluorescens.</title>
        <authorList>
            <person name="Silby M.W."/>
            <person name="Cerdeno-Tarraga A.M."/>
            <person name="Vernikos G.S."/>
            <person name="Giddens S.R."/>
            <person name="Jackson R.W."/>
            <person name="Preston G.M."/>
            <person name="Zhang X.-X."/>
            <person name="Moon C.D."/>
            <person name="Gehrig S.M."/>
            <person name="Godfrey S.A.C."/>
            <person name="Knight C.G."/>
            <person name="Malone J.G."/>
            <person name="Robinson Z."/>
            <person name="Spiers A.J."/>
            <person name="Harris S."/>
            <person name="Challis G.L."/>
            <person name="Yaxley A.M."/>
            <person name="Harris D."/>
            <person name="Seeger K."/>
            <person name="Murphy L."/>
            <person name="Rutter S."/>
            <person name="Squares R."/>
            <person name="Quail M.A."/>
            <person name="Saunders E."/>
            <person name="Mavromatis K."/>
            <person name="Brettin T.S."/>
            <person name="Bentley S.D."/>
            <person name="Hothersall J."/>
            <person name="Stephens E."/>
            <person name="Thomas C.M."/>
            <person name="Parkhill J."/>
            <person name="Levy S.B."/>
            <person name="Rainey P.B."/>
            <person name="Thomson N.R."/>
        </authorList>
    </citation>
    <scope>NUCLEOTIDE SEQUENCE [LARGE SCALE GENOMIC DNA]</scope>
    <source>
        <strain>SBW25</strain>
    </source>
</reference>
<accession>C3K2W4</accession>
<protein>
    <recommendedName>
        <fullName evidence="1">Large ribosomal subunit protein uL5</fullName>
    </recommendedName>
    <alternativeName>
        <fullName evidence="2">50S ribosomal protein L5</fullName>
    </alternativeName>
</protein>
<evidence type="ECO:0000255" key="1">
    <source>
        <dbReference type="HAMAP-Rule" id="MF_01333"/>
    </source>
</evidence>
<evidence type="ECO:0000305" key="2"/>
<feature type="chain" id="PRO_1000214639" description="Large ribosomal subunit protein uL5">
    <location>
        <begin position="1"/>
        <end position="179"/>
    </location>
</feature>
<comment type="function">
    <text evidence="1">This is one of the proteins that bind and probably mediate the attachment of the 5S RNA into the large ribosomal subunit, where it forms part of the central protuberance. In the 70S ribosome it contacts protein S13 of the 30S subunit (bridge B1b), connecting the 2 subunits; this bridge is implicated in subunit movement. Contacts the P site tRNA; the 5S rRNA and some of its associated proteins might help stabilize positioning of ribosome-bound tRNAs.</text>
</comment>
<comment type="subunit">
    <text evidence="1">Part of the 50S ribosomal subunit; part of the 5S rRNA/L5/L18/L25 subcomplex. Contacts the 5S rRNA and the P site tRNA. Forms a bridge to the 30S subunit in the 70S ribosome.</text>
</comment>
<comment type="similarity">
    <text evidence="1">Belongs to the universal ribosomal protein uL5 family.</text>
</comment>